<comment type="subcellular location">
    <subcellularLocation>
        <location evidence="2">Mitochondrion</location>
    </subcellularLocation>
</comment>
<geneLocation type="mitochondrion"/>
<proteinExistence type="predicted"/>
<name>M130_ARATH</name>
<evidence type="ECO:0000256" key="1">
    <source>
        <dbReference type="SAM" id="MobiDB-lite"/>
    </source>
</evidence>
<evidence type="ECO:0000305" key="2"/>
<accession>P93282</accession>
<reference key="1">
    <citation type="journal article" date="1997" name="Nat. Genet.">
        <title>The mitochondrial genome of Arabidopsis thaliana contains 57 genes in 366,924 nucleotides.</title>
        <authorList>
            <person name="Unseld M."/>
            <person name="Marienfeld J.R."/>
            <person name="Brandt P."/>
            <person name="Brennicke A."/>
        </authorList>
    </citation>
    <scope>NUCLEOTIDE SEQUENCE [LARGE SCALE GENOMIC DNA]</scope>
    <source>
        <strain>cv. C24</strain>
    </source>
</reference>
<reference key="2">
    <citation type="journal article" date="2018" name="Plant Cell">
        <title>Correction of persistent errors in Arabidopsis reference mitochondrial genomes.</title>
        <authorList>
            <person name="Sloan D.B."/>
            <person name="Wu Z."/>
            <person name="Sharbrough J."/>
        </authorList>
    </citation>
    <scope>NUCLEOTIDE SEQUENCE [LARGE SCALE GENOMIC DNA]</scope>
    <source>
        <strain>cv. Columbia</strain>
    </source>
</reference>
<keyword id="KW-0496">Mitochondrion</keyword>
<keyword id="KW-1185">Reference proteome</keyword>
<gene>
    <name type="ordered locus">AtMg00130</name>
</gene>
<organism>
    <name type="scientific">Arabidopsis thaliana</name>
    <name type="common">Mouse-ear cress</name>
    <dbReference type="NCBI Taxonomy" id="3702"/>
    <lineage>
        <taxon>Eukaryota</taxon>
        <taxon>Viridiplantae</taxon>
        <taxon>Streptophyta</taxon>
        <taxon>Embryophyta</taxon>
        <taxon>Tracheophyta</taxon>
        <taxon>Spermatophyta</taxon>
        <taxon>Magnoliopsida</taxon>
        <taxon>eudicotyledons</taxon>
        <taxon>Gunneridae</taxon>
        <taxon>Pentapetalae</taxon>
        <taxon>rosids</taxon>
        <taxon>malvids</taxon>
        <taxon>Brassicales</taxon>
        <taxon>Brassicaceae</taxon>
        <taxon>Camelineae</taxon>
        <taxon>Arabidopsis</taxon>
    </lineage>
</organism>
<dbReference type="EMBL" id="Y08501">
    <property type="protein sequence ID" value="CAA69758.1"/>
    <property type="molecule type" value="Genomic_DNA"/>
</dbReference>
<dbReference type="EMBL" id="BK010421">
    <property type="status" value="NOT_ANNOTATED_CDS"/>
    <property type="molecule type" value="Genomic_DNA"/>
</dbReference>
<dbReference type="RefSeq" id="NP_085484.1">
    <property type="nucleotide sequence ID" value="NC_001284.2"/>
</dbReference>
<dbReference type="SMR" id="P93282"/>
<dbReference type="STRING" id="3702.P93282"/>
<dbReference type="PaxDb" id="3702-ATMG00130.1"/>
<dbReference type="EnsemblPlants" id="ATMG00130.1">
    <property type="protein sequence ID" value="ATMG00130.1"/>
    <property type="gene ID" value="ATMG00130"/>
</dbReference>
<dbReference type="Gramene" id="ATMG00130.1">
    <property type="protein sequence ID" value="ATMG00130.1"/>
    <property type="gene ID" value="ATMG00130"/>
</dbReference>
<dbReference type="Araport" id="ATMG00130"/>
<dbReference type="TAIR" id="ATMG00130">
    <property type="gene designation" value="ORF121A"/>
</dbReference>
<dbReference type="HOGENOM" id="CLU_2041260_0_0_1"/>
<dbReference type="InParanoid" id="P93282"/>
<dbReference type="PRO" id="PR:P93282"/>
<dbReference type="Proteomes" id="UP000006548">
    <property type="component" value="Mitochondrion MT"/>
</dbReference>
<dbReference type="GO" id="GO:0005739">
    <property type="term" value="C:mitochondrion"/>
    <property type="evidence" value="ECO:0007669"/>
    <property type="project" value="UniProtKB-SubCell"/>
</dbReference>
<protein>
    <recommendedName>
        <fullName>Uncharacterized mitochondrial protein AtMg00130</fullName>
    </recommendedName>
    <alternativeName>
        <fullName>ORF121a</fullName>
    </alternativeName>
</protein>
<sequence>MASKIRKVTNQNMRINSSLSKSSTFSTRLRITDSYLSSPSVTELAPLTLTTGDDFTVTLSVTPTMNSLESQVICPRAYDCKERIPPNQHIVSLELTYHPASIEPTATGSPETRDPDPSAYA</sequence>
<feature type="chain" id="PRO_0000196756" description="Uncharacterized mitochondrial protein AtMg00130">
    <location>
        <begin position="1"/>
        <end position="121"/>
    </location>
</feature>
<feature type="region of interest" description="Disordered" evidence="1">
    <location>
        <begin position="101"/>
        <end position="121"/>
    </location>
</feature>
<feature type="compositionally biased region" description="Basic and acidic residues" evidence="1">
    <location>
        <begin position="111"/>
        <end position="121"/>
    </location>
</feature>